<organism>
    <name type="scientific">Arabidopsis thaliana</name>
    <name type="common">Mouse-ear cress</name>
    <dbReference type="NCBI Taxonomy" id="3702"/>
    <lineage>
        <taxon>Eukaryota</taxon>
        <taxon>Viridiplantae</taxon>
        <taxon>Streptophyta</taxon>
        <taxon>Embryophyta</taxon>
        <taxon>Tracheophyta</taxon>
        <taxon>Spermatophyta</taxon>
        <taxon>Magnoliopsida</taxon>
        <taxon>eudicotyledons</taxon>
        <taxon>Gunneridae</taxon>
        <taxon>Pentapetalae</taxon>
        <taxon>rosids</taxon>
        <taxon>malvids</taxon>
        <taxon>Brassicales</taxon>
        <taxon>Brassicaceae</taxon>
        <taxon>Camelineae</taxon>
        <taxon>Arabidopsis</taxon>
    </lineage>
</organism>
<reference key="1">
    <citation type="journal article" date="1999" name="Nature">
        <title>Sequence and analysis of chromosome 2 of the plant Arabidopsis thaliana.</title>
        <authorList>
            <person name="Lin X."/>
            <person name="Kaul S."/>
            <person name="Rounsley S.D."/>
            <person name="Shea T.P."/>
            <person name="Benito M.-I."/>
            <person name="Town C.D."/>
            <person name="Fujii C.Y."/>
            <person name="Mason T.M."/>
            <person name="Bowman C.L."/>
            <person name="Barnstead M.E."/>
            <person name="Feldblyum T.V."/>
            <person name="Buell C.R."/>
            <person name="Ketchum K.A."/>
            <person name="Lee J.J."/>
            <person name="Ronning C.M."/>
            <person name="Koo H.L."/>
            <person name="Moffat K.S."/>
            <person name="Cronin L.A."/>
            <person name="Shen M."/>
            <person name="Pai G."/>
            <person name="Van Aken S."/>
            <person name="Umayam L."/>
            <person name="Tallon L.J."/>
            <person name="Gill J.E."/>
            <person name="Adams M.D."/>
            <person name="Carrera A.J."/>
            <person name="Creasy T.H."/>
            <person name="Goodman H.M."/>
            <person name="Somerville C.R."/>
            <person name="Copenhaver G.P."/>
            <person name="Preuss D."/>
            <person name="Nierman W.C."/>
            <person name="White O."/>
            <person name="Eisen J.A."/>
            <person name="Salzberg S.L."/>
            <person name="Fraser C.M."/>
            <person name="Venter J.C."/>
        </authorList>
    </citation>
    <scope>NUCLEOTIDE SEQUENCE [LARGE SCALE GENOMIC DNA]</scope>
    <source>
        <strain>cv. Columbia</strain>
    </source>
</reference>
<reference key="2">
    <citation type="journal article" date="2017" name="Plant J.">
        <title>Araport11: a complete reannotation of the Arabidopsis thaliana reference genome.</title>
        <authorList>
            <person name="Cheng C.Y."/>
            <person name="Krishnakumar V."/>
            <person name="Chan A.P."/>
            <person name="Thibaud-Nissen F."/>
            <person name="Schobel S."/>
            <person name="Town C.D."/>
        </authorList>
    </citation>
    <scope>GENOME REANNOTATION</scope>
    <source>
        <strain>cv. Columbia</strain>
    </source>
</reference>
<reference key="3">
    <citation type="journal article" date="2003" name="Science">
        <title>Empirical analysis of transcriptional activity in the Arabidopsis genome.</title>
        <authorList>
            <person name="Yamada K."/>
            <person name="Lim J."/>
            <person name="Dale J.M."/>
            <person name="Chen H."/>
            <person name="Shinn P."/>
            <person name="Palm C.J."/>
            <person name="Southwick A.M."/>
            <person name="Wu H.C."/>
            <person name="Kim C.J."/>
            <person name="Nguyen M."/>
            <person name="Pham P.K."/>
            <person name="Cheuk R.F."/>
            <person name="Karlin-Newmann G."/>
            <person name="Liu S.X."/>
            <person name="Lam B."/>
            <person name="Sakano H."/>
            <person name="Wu T."/>
            <person name="Yu G."/>
            <person name="Miranda M."/>
            <person name="Quach H.L."/>
            <person name="Tripp M."/>
            <person name="Chang C.H."/>
            <person name="Lee J.M."/>
            <person name="Toriumi M.J."/>
            <person name="Chan M.M."/>
            <person name="Tang C.C."/>
            <person name="Onodera C.S."/>
            <person name="Deng J.M."/>
            <person name="Akiyama K."/>
            <person name="Ansari Y."/>
            <person name="Arakawa T."/>
            <person name="Banh J."/>
            <person name="Banno F."/>
            <person name="Bowser L."/>
            <person name="Brooks S.Y."/>
            <person name="Carninci P."/>
            <person name="Chao Q."/>
            <person name="Choy N."/>
            <person name="Enju A."/>
            <person name="Goldsmith A.D."/>
            <person name="Gurjal M."/>
            <person name="Hansen N.F."/>
            <person name="Hayashizaki Y."/>
            <person name="Johnson-Hopson C."/>
            <person name="Hsuan V.W."/>
            <person name="Iida K."/>
            <person name="Karnes M."/>
            <person name="Khan S."/>
            <person name="Koesema E."/>
            <person name="Ishida J."/>
            <person name="Jiang P.X."/>
            <person name="Jones T."/>
            <person name="Kawai J."/>
            <person name="Kamiya A."/>
            <person name="Meyers C."/>
            <person name="Nakajima M."/>
            <person name="Narusaka M."/>
            <person name="Seki M."/>
            <person name="Sakurai T."/>
            <person name="Satou M."/>
            <person name="Tamse R."/>
            <person name="Vaysberg M."/>
            <person name="Wallender E.K."/>
            <person name="Wong C."/>
            <person name="Yamamura Y."/>
            <person name="Yuan S."/>
            <person name="Shinozaki K."/>
            <person name="Davis R.W."/>
            <person name="Theologis A."/>
            <person name="Ecker J.R."/>
        </authorList>
    </citation>
    <scope>NUCLEOTIDE SEQUENCE [LARGE SCALE MRNA]</scope>
    <source>
        <strain>cv. Columbia</strain>
    </source>
</reference>
<reference key="4">
    <citation type="journal article" date="2009" name="Plant J.">
        <title>Unequally redundant RCD1 and SRO1 mediate stress and developmental responses and interact with transcription factors.</title>
        <authorList>
            <person name="Jaspers P."/>
            <person name="Blomster T."/>
            <person name="Brosche M."/>
            <person name="Salojaervi J."/>
            <person name="Ahlfors R."/>
            <person name="Vainonen J.P."/>
            <person name="Reddy R.A."/>
            <person name="Immink R."/>
            <person name="Angenent G."/>
            <person name="Turck F."/>
            <person name="Overmyer K."/>
            <person name="Kangasjaervi J."/>
        </authorList>
    </citation>
    <scope>FUNCTION</scope>
    <scope>INTERACTION WITH DREB2A; DREB2B; DREB2C AND NAC082</scope>
    <scope>SUBCELLULAR LOCATION</scope>
    <scope>TISSUE SPECIFICITY</scope>
    <scope>DISRUPTION PHENOTYPE</scope>
</reference>
<reference key="5">
    <citation type="journal article" date="2009" name="Plant Physiol.">
        <title>The paralogous genes RADICAL-INDUCED CELL DEATH1 and SIMILAR TO RCD ONE1 have partially redundant functions during Arabidopsis development.</title>
        <authorList>
            <person name="Teotia S."/>
            <person name="Lamb R.S."/>
        </authorList>
    </citation>
    <scope>FUNCTION</scope>
    <scope>TISSUE SPECIFICITY</scope>
</reference>
<reference key="6">
    <citation type="journal article" date="2010" name="BMC Genomics">
        <title>The RST and PARP-like domain containing SRO protein family: analysis of protein structure, function and conservation in land plants.</title>
        <authorList>
            <person name="Jaspers P."/>
            <person name="Overmyer K."/>
            <person name="Wrzaczek M."/>
            <person name="Vainonen J.P."/>
            <person name="Blomster T."/>
            <person name="Salojaervi J."/>
            <person name="Reddy R.A."/>
            <person name="Kangasjaervi J."/>
        </authorList>
    </citation>
    <scope>INDUCTION</scope>
</reference>
<reference key="7">
    <citation type="journal article" date="2010" name="Plant Signal. Behav.">
        <title>Radical-induced cell death1 and similar to RCD one1 and the stress-induced morphogenetic response.</title>
        <authorList>
            <person name="Teotia S."/>
            <person name="Muthuswamy S."/>
            <person name="Lamb R.S."/>
        </authorList>
    </citation>
    <scope>DISRUPTION PHENOTYPE</scope>
</reference>
<reference key="8">
    <citation type="journal article" date="2011" name="J. Exp. Bot.">
        <title>RCD1 and SRO1 are necessary to maintain meristematic fate in Arabidopsis thaliana.</title>
        <authorList>
            <person name="Teotia S."/>
            <person name="Lamb R.S."/>
        </authorList>
    </citation>
    <scope>FUNCTION</scope>
    <scope>TISSUE SPECIFICITY</scope>
    <scope>DEVELOPMENTAL STAGE</scope>
    <scope>DISRUPTION PHENOTYPE</scope>
</reference>
<dbReference type="EMBL" id="AC005314">
    <property type="protein sequence ID" value="AAC36170.2"/>
    <property type="molecule type" value="Genomic_DNA"/>
</dbReference>
<dbReference type="EMBL" id="CP002685">
    <property type="protein sequence ID" value="AEC09115.1"/>
    <property type="molecule type" value="Genomic_DNA"/>
</dbReference>
<dbReference type="EMBL" id="CP002685">
    <property type="protein sequence ID" value="ANM61534.1"/>
    <property type="molecule type" value="Genomic_DNA"/>
</dbReference>
<dbReference type="EMBL" id="AY056136">
    <property type="protein sequence ID" value="AAL07215.1"/>
    <property type="molecule type" value="mRNA"/>
</dbReference>
<dbReference type="EMBL" id="AY150402">
    <property type="protein sequence ID" value="AAN12947.1"/>
    <property type="molecule type" value="mRNA"/>
</dbReference>
<dbReference type="PIR" id="E84769">
    <property type="entry name" value="E84769"/>
</dbReference>
<dbReference type="RefSeq" id="NP_001323747.1">
    <property type="nucleotide sequence ID" value="NM_001336558.1"/>
</dbReference>
<dbReference type="RefSeq" id="NP_565806.1">
    <property type="nucleotide sequence ID" value="NM_129103.5"/>
</dbReference>
<dbReference type="SMR" id="O82289"/>
<dbReference type="BioGRID" id="3462">
    <property type="interactions" value="5"/>
</dbReference>
<dbReference type="FunCoup" id="O82289">
    <property type="interactions" value="1922"/>
</dbReference>
<dbReference type="IntAct" id="O82289">
    <property type="interactions" value="5"/>
</dbReference>
<dbReference type="STRING" id="3702.O82289"/>
<dbReference type="iPTMnet" id="O82289"/>
<dbReference type="PaxDb" id="3702-AT2G35510.1"/>
<dbReference type="ProteomicsDB" id="226713"/>
<dbReference type="EnsemblPlants" id="AT2G35510.1">
    <property type="protein sequence ID" value="AT2G35510.1"/>
    <property type="gene ID" value="AT2G35510"/>
</dbReference>
<dbReference type="EnsemblPlants" id="AT2G35510.3">
    <property type="protein sequence ID" value="AT2G35510.3"/>
    <property type="gene ID" value="AT2G35510"/>
</dbReference>
<dbReference type="GeneID" id="818116"/>
<dbReference type="Gramene" id="AT2G35510.1">
    <property type="protein sequence ID" value="AT2G35510.1"/>
    <property type="gene ID" value="AT2G35510"/>
</dbReference>
<dbReference type="Gramene" id="AT2G35510.3">
    <property type="protein sequence ID" value="AT2G35510.3"/>
    <property type="gene ID" value="AT2G35510"/>
</dbReference>
<dbReference type="KEGG" id="ath:AT2G35510"/>
<dbReference type="Araport" id="AT2G35510"/>
<dbReference type="TAIR" id="AT2G35510">
    <property type="gene designation" value="SRO1"/>
</dbReference>
<dbReference type="eggNOG" id="ENOG502QZEX">
    <property type="taxonomic scope" value="Eukaryota"/>
</dbReference>
<dbReference type="HOGENOM" id="CLU_027033_1_0_1"/>
<dbReference type="InParanoid" id="O82289"/>
<dbReference type="OMA" id="ESNCRSH"/>
<dbReference type="OrthoDB" id="6133115at2759"/>
<dbReference type="PhylomeDB" id="O82289"/>
<dbReference type="PRO" id="PR:O82289"/>
<dbReference type="Proteomes" id="UP000006548">
    <property type="component" value="Chromosome 2"/>
</dbReference>
<dbReference type="ExpressionAtlas" id="O82289">
    <property type="expression patterns" value="baseline and differential"/>
</dbReference>
<dbReference type="GO" id="GO:0016363">
    <property type="term" value="C:nuclear matrix"/>
    <property type="evidence" value="ECO:0007669"/>
    <property type="project" value="UniProtKB-SubCell"/>
</dbReference>
<dbReference type="GO" id="GO:0003950">
    <property type="term" value="F:NAD+ poly-ADP-ribosyltransferase activity"/>
    <property type="evidence" value="ECO:0007669"/>
    <property type="project" value="InterPro"/>
</dbReference>
<dbReference type="GO" id="GO:0009793">
    <property type="term" value="P:embryo development ending in seed dormancy"/>
    <property type="evidence" value="ECO:0000315"/>
    <property type="project" value="TAIR"/>
</dbReference>
<dbReference type="GO" id="GO:0010102">
    <property type="term" value="P:lateral root morphogenesis"/>
    <property type="evidence" value="ECO:0000315"/>
    <property type="project" value="TAIR"/>
</dbReference>
<dbReference type="GO" id="GO:0048573">
    <property type="term" value="P:photoperiodism, flowering"/>
    <property type="evidence" value="ECO:0000315"/>
    <property type="project" value="TAIR"/>
</dbReference>
<dbReference type="GO" id="GO:0006970">
    <property type="term" value="P:response to osmotic stress"/>
    <property type="evidence" value="ECO:0000315"/>
    <property type="project" value="TAIR"/>
</dbReference>
<dbReference type="GO" id="GO:0006979">
    <property type="term" value="P:response to oxidative stress"/>
    <property type="evidence" value="ECO:0000315"/>
    <property type="project" value="TAIR"/>
</dbReference>
<dbReference type="GO" id="GO:0009651">
    <property type="term" value="P:response to salt stress"/>
    <property type="evidence" value="ECO:0000315"/>
    <property type="project" value="TAIR"/>
</dbReference>
<dbReference type="Gene3D" id="3.90.228.10">
    <property type="match status" value="1"/>
</dbReference>
<dbReference type="InterPro" id="IPR012317">
    <property type="entry name" value="Poly(ADP-ribose)pol_cat_dom"/>
</dbReference>
<dbReference type="InterPro" id="IPR044964">
    <property type="entry name" value="RCD1/SRO1-5"/>
</dbReference>
<dbReference type="InterPro" id="IPR022003">
    <property type="entry name" value="RST"/>
</dbReference>
<dbReference type="InterPro" id="IPR004170">
    <property type="entry name" value="WWE_dom"/>
</dbReference>
<dbReference type="PANTHER" id="PTHR32263:SF5">
    <property type="entry name" value="INACTIVE POLY [ADP-RIBOSE] POLYMERASE SRO1-RELATED"/>
    <property type="match status" value="1"/>
</dbReference>
<dbReference type="PANTHER" id="PTHR32263">
    <property type="entry name" value="INACTIVE POLY [ADP-RIBOSE] POLYMERASE SRO4-RELATED"/>
    <property type="match status" value="1"/>
</dbReference>
<dbReference type="Pfam" id="PF00644">
    <property type="entry name" value="PARP"/>
    <property type="match status" value="1"/>
</dbReference>
<dbReference type="Pfam" id="PF12174">
    <property type="entry name" value="RST"/>
    <property type="match status" value="1"/>
</dbReference>
<dbReference type="Pfam" id="PF23467">
    <property type="entry name" value="WWE_5"/>
    <property type="match status" value="1"/>
</dbReference>
<dbReference type="SUPFAM" id="SSF56399">
    <property type="entry name" value="ADP-ribosylation"/>
    <property type="match status" value="1"/>
</dbReference>
<dbReference type="PROSITE" id="PS51059">
    <property type="entry name" value="PARP_CATALYTIC"/>
    <property type="match status" value="1"/>
</dbReference>
<dbReference type="PROSITE" id="PS51879">
    <property type="entry name" value="RST"/>
    <property type="match status" value="1"/>
</dbReference>
<dbReference type="PROSITE" id="PS50918">
    <property type="entry name" value="WWE"/>
    <property type="match status" value="1"/>
</dbReference>
<comment type="function">
    <text evidence="5 6 9">Probable inactive ADP-ribosyltransferase that functions with RCD1 to regulate oxidative stress, hormonal and developmental responses. May regulate some stress-responsive genes. Seems to play a smaller developmental role than R.</text>
</comment>
<comment type="subunit">
    <text evidence="5">Interacts with DREB2A, DREB2B, DREB2C and NAC082.</text>
</comment>
<comment type="subcellular location">
    <subcellularLocation>
        <location evidence="5">Nucleus matrix</location>
    </subcellularLocation>
    <text>Speckle-like pattern.</text>
</comment>
<comment type="tissue specificity">
    <text evidence="5 6 9">Expressed in young developing tissues, such as young leaves and flowers and root tips. In mature plants, expressed in vasculature of leaves and roots.</text>
</comment>
<comment type="developmental stage">
    <text evidence="9">Expressed in the embryo proper at the globular stage. Expressed in the embryo until the torpedo stage, after which expression within the procambial strands becomes pronounced.</text>
</comment>
<comment type="induction">
    <text evidence="8">By salt stress.</text>
</comment>
<comment type="disruption phenotype">
    <text evidence="5 7 9">No visible phenotype under normal growth condition.</text>
</comment>
<comment type="caution">
    <text evidence="10">Lacks the conserved catalytic triad His-Tyr-Glu of the active site.</text>
</comment>
<accession>O82289</accession>
<accession>Q940B2</accession>
<protein>
    <recommendedName>
        <fullName>Probable inactive poly [ADP-ribose] polymerase SRO1</fullName>
    </recommendedName>
    <alternativeName>
        <fullName>Protein SIMILAR TO RCD ONE 1</fullName>
    </alternativeName>
</protein>
<sequence>MEAKIVKVSDSSYKDGLGKKRKHPGNYTPYDSGRSYAKLQWVLSPNSSTQKLEKRRNLDGENKVIVSENHVEKSLVRYFSYYKKTGVPKRVMFHENGEWIDLPDHILCDIRNDLEAKRATIEFNWCGRHFLLDFLHMYRLDLETGVKTQLAWIDIAGKCFFPETFDTLERDGCHHIRGEDPEQHDQREIKLHIEIDVNSGELPRLNLNVVTDESGDNMDDFQAVQRSSNGPNDEASEDSCSRELDDAVEKWDKTETDRFSGVKPAEEELDKDAVKQMFALGAATLGHVESLDVYQFSSEIAKARLSLFQKQADITKKHRGDANIRYAWVPAKKEVLSAVMMHGLGVGGAFIKKSMYGVGVHAANCPYFSARYCDIDDNGVRHMVLCRVIMGNMEPLRGDNTQYFTGGEEYDNGVDDVESPKHYLIWNMNMNTHIYPEFVVSFKLSIPNAEGNILPTTQSRHESSGLTLEGPKGSPSNEPGRVSNGGSGSEKNSSSSRRPRSPIMPFPLLFKAISSKIARKDMDLIIAGYQELREKKVSRKEFYKTLSMIVGDDDLLISTITGLQRSLG</sequence>
<evidence type="ECO:0000255" key="1">
    <source>
        <dbReference type="PROSITE-ProRule" id="PRU00248"/>
    </source>
</evidence>
<evidence type="ECO:0000255" key="2">
    <source>
        <dbReference type="PROSITE-ProRule" id="PRU00397"/>
    </source>
</evidence>
<evidence type="ECO:0000255" key="3">
    <source>
        <dbReference type="PROSITE-ProRule" id="PRU01227"/>
    </source>
</evidence>
<evidence type="ECO:0000256" key="4">
    <source>
        <dbReference type="SAM" id="MobiDB-lite"/>
    </source>
</evidence>
<evidence type="ECO:0000269" key="5">
    <source>
    </source>
</evidence>
<evidence type="ECO:0000269" key="6">
    <source>
    </source>
</evidence>
<evidence type="ECO:0000269" key="7">
    <source>
    </source>
</evidence>
<evidence type="ECO:0000269" key="8">
    <source>
    </source>
</evidence>
<evidence type="ECO:0000269" key="9">
    <source>
    </source>
</evidence>
<evidence type="ECO:0000305" key="10"/>
<feature type="chain" id="PRO_0000410419" description="Probable inactive poly [ADP-ribose] polymerase SRO1">
    <location>
        <begin position="1"/>
        <end position="568"/>
    </location>
</feature>
<feature type="domain" description="WWE" evidence="1">
    <location>
        <begin position="77"/>
        <end position="152"/>
    </location>
</feature>
<feature type="domain" description="PARP catalytic" evidence="2">
    <location>
        <begin position="245"/>
        <end position="463"/>
    </location>
</feature>
<feature type="domain" description="RST" evidence="3">
    <location>
        <begin position="497"/>
        <end position="568"/>
    </location>
</feature>
<feature type="region of interest" description="Disordered" evidence="4">
    <location>
        <begin position="1"/>
        <end position="32"/>
    </location>
</feature>
<feature type="region of interest" description="Disordered" evidence="4">
    <location>
        <begin position="220"/>
        <end position="241"/>
    </location>
</feature>
<feature type="region of interest" description="Disordered" evidence="4">
    <location>
        <begin position="453"/>
        <end position="500"/>
    </location>
</feature>
<feature type="compositionally biased region" description="Basic and acidic residues" evidence="4">
    <location>
        <begin position="1"/>
        <end position="18"/>
    </location>
</feature>
<feature type="sequence conflict" description="In Ref. 3; AAL07215." evidence="10" ref="3">
    <original>E</original>
    <variation>K</variation>
    <location>
        <position position="409"/>
    </location>
</feature>
<proteinExistence type="evidence at protein level"/>
<keyword id="KW-0217">Developmental protein</keyword>
<keyword id="KW-0539">Nucleus</keyword>
<keyword id="KW-1185">Reference proteome</keyword>
<keyword id="KW-0346">Stress response</keyword>
<gene>
    <name type="primary">SRO1</name>
    <name type="synonym">CEO2</name>
    <name type="ordered locus">At2g35510</name>
    <name type="ORF">T32F12.11</name>
</gene>
<name>SRO1_ARATH</name>